<keyword id="KW-0687">Ribonucleoprotein</keyword>
<keyword id="KW-0689">Ribosomal protein</keyword>
<keyword id="KW-0694">RNA-binding</keyword>
<keyword id="KW-0699">rRNA-binding</keyword>
<evidence type="ECO:0000255" key="1">
    <source>
        <dbReference type="HAMAP-Rule" id="MF_00531"/>
    </source>
</evidence>
<evidence type="ECO:0000305" key="2"/>
<feature type="chain" id="PRO_1000146365" description="Small ribosomal subunit protein uS19">
    <location>
        <begin position="1"/>
        <end position="92"/>
    </location>
</feature>
<name>RS19_BACAC</name>
<sequence>MARSLKKGPFVDDHLMSKIAKLNETEQKQVVKTWSRRSTIFPQFIGHTIAVYDGRKHVPVYVTEDMVGHKLGEFAPTRTYKGHDADDKKTRR</sequence>
<protein>
    <recommendedName>
        <fullName evidence="1">Small ribosomal subunit protein uS19</fullName>
    </recommendedName>
    <alternativeName>
        <fullName evidence="2">30S ribosomal protein S19</fullName>
    </alternativeName>
</protein>
<proteinExistence type="inferred from homology"/>
<dbReference type="EMBL" id="CP001215">
    <property type="protein sequence ID" value="ACP12894.1"/>
    <property type="molecule type" value="Genomic_DNA"/>
</dbReference>
<dbReference type="RefSeq" id="WP_000124453.1">
    <property type="nucleotide sequence ID" value="NC_012581.1"/>
</dbReference>
<dbReference type="SMR" id="C3LJ86"/>
<dbReference type="GeneID" id="93010939"/>
<dbReference type="KEGG" id="bah:BAMEG_0130"/>
<dbReference type="HOGENOM" id="CLU_144911_0_1_9"/>
<dbReference type="GO" id="GO:0005737">
    <property type="term" value="C:cytoplasm"/>
    <property type="evidence" value="ECO:0007669"/>
    <property type="project" value="UniProtKB-ARBA"/>
</dbReference>
<dbReference type="GO" id="GO:0015935">
    <property type="term" value="C:small ribosomal subunit"/>
    <property type="evidence" value="ECO:0007669"/>
    <property type="project" value="InterPro"/>
</dbReference>
<dbReference type="GO" id="GO:0019843">
    <property type="term" value="F:rRNA binding"/>
    <property type="evidence" value="ECO:0007669"/>
    <property type="project" value="UniProtKB-UniRule"/>
</dbReference>
<dbReference type="GO" id="GO:0003735">
    <property type="term" value="F:structural constituent of ribosome"/>
    <property type="evidence" value="ECO:0007669"/>
    <property type="project" value="InterPro"/>
</dbReference>
<dbReference type="GO" id="GO:0000028">
    <property type="term" value="P:ribosomal small subunit assembly"/>
    <property type="evidence" value="ECO:0007669"/>
    <property type="project" value="TreeGrafter"/>
</dbReference>
<dbReference type="GO" id="GO:0006412">
    <property type="term" value="P:translation"/>
    <property type="evidence" value="ECO:0007669"/>
    <property type="project" value="UniProtKB-UniRule"/>
</dbReference>
<dbReference type="FunFam" id="3.30.860.10:FF:000001">
    <property type="entry name" value="30S ribosomal protein S19"/>
    <property type="match status" value="1"/>
</dbReference>
<dbReference type="Gene3D" id="3.30.860.10">
    <property type="entry name" value="30s Ribosomal Protein S19, Chain A"/>
    <property type="match status" value="1"/>
</dbReference>
<dbReference type="HAMAP" id="MF_00531">
    <property type="entry name" value="Ribosomal_uS19"/>
    <property type="match status" value="1"/>
</dbReference>
<dbReference type="InterPro" id="IPR002222">
    <property type="entry name" value="Ribosomal_uS19"/>
</dbReference>
<dbReference type="InterPro" id="IPR005732">
    <property type="entry name" value="Ribosomal_uS19_bac-type"/>
</dbReference>
<dbReference type="InterPro" id="IPR020934">
    <property type="entry name" value="Ribosomal_uS19_CS"/>
</dbReference>
<dbReference type="InterPro" id="IPR023575">
    <property type="entry name" value="Ribosomal_uS19_SF"/>
</dbReference>
<dbReference type="NCBIfam" id="TIGR01050">
    <property type="entry name" value="rpsS_bact"/>
    <property type="match status" value="1"/>
</dbReference>
<dbReference type="PANTHER" id="PTHR11880">
    <property type="entry name" value="RIBOSOMAL PROTEIN S19P FAMILY MEMBER"/>
    <property type="match status" value="1"/>
</dbReference>
<dbReference type="PANTHER" id="PTHR11880:SF8">
    <property type="entry name" value="SMALL RIBOSOMAL SUBUNIT PROTEIN US19M"/>
    <property type="match status" value="1"/>
</dbReference>
<dbReference type="Pfam" id="PF00203">
    <property type="entry name" value="Ribosomal_S19"/>
    <property type="match status" value="1"/>
</dbReference>
<dbReference type="PIRSF" id="PIRSF002144">
    <property type="entry name" value="Ribosomal_S19"/>
    <property type="match status" value="1"/>
</dbReference>
<dbReference type="PRINTS" id="PR00975">
    <property type="entry name" value="RIBOSOMALS19"/>
</dbReference>
<dbReference type="SUPFAM" id="SSF54570">
    <property type="entry name" value="Ribosomal protein S19"/>
    <property type="match status" value="1"/>
</dbReference>
<dbReference type="PROSITE" id="PS00323">
    <property type="entry name" value="RIBOSOMAL_S19"/>
    <property type="match status" value="1"/>
</dbReference>
<gene>
    <name evidence="1" type="primary">rpsS</name>
    <name type="ordered locus">BAMEG_0130</name>
</gene>
<reference key="1">
    <citation type="submission" date="2008-10" db="EMBL/GenBank/DDBJ databases">
        <title>Genome sequence of Bacillus anthracis str. CDC 684.</title>
        <authorList>
            <person name="Dodson R.J."/>
            <person name="Munk A.C."/>
            <person name="Brettin T."/>
            <person name="Bruce D."/>
            <person name="Detter C."/>
            <person name="Tapia R."/>
            <person name="Han C."/>
            <person name="Sutton G."/>
            <person name="Sims D."/>
        </authorList>
    </citation>
    <scope>NUCLEOTIDE SEQUENCE [LARGE SCALE GENOMIC DNA]</scope>
    <source>
        <strain>CDC 684 / NRRL 3495</strain>
    </source>
</reference>
<accession>C3LJ86</accession>
<comment type="function">
    <text evidence="1">Protein S19 forms a complex with S13 that binds strongly to the 16S ribosomal RNA.</text>
</comment>
<comment type="similarity">
    <text evidence="1">Belongs to the universal ribosomal protein uS19 family.</text>
</comment>
<organism>
    <name type="scientific">Bacillus anthracis (strain CDC 684 / NRRL 3495)</name>
    <dbReference type="NCBI Taxonomy" id="568206"/>
    <lineage>
        <taxon>Bacteria</taxon>
        <taxon>Bacillati</taxon>
        <taxon>Bacillota</taxon>
        <taxon>Bacilli</taxon>
        <taxon>Bacillales</taxon>
        <taxon>Bacillaceae</taxon>
        <taxon>Bacillus</taxon>
        <taxon>Bacillus cereus group</taxon>
    </lineage>
</organism>